<proteinExistence type="inferred from homology"/>
<reference key="1">
    <citation type="journal article" date="2012" name="Chem. Biol.">
        <title>Terpendole E, a kinesin Eg5 inhibitor, is a key biosynthetic intermediate of indole-diterpenes in the producing fungus Chaunopycnis alba.</title>
        <authorList>
            <person name="Motoyama T."/>
            <person name="Hayashi T."/>
            <person name="Hirota H."/>
            <person name="Ueki M."/>
            <person name="Osada H."/>
        </authorList>
    </citation>
    <scope>NUCLEOTIDE SEQUENCE [GENOMIC DNA]</scope>
    <scope>FUNCTION</scope>
    <scope>DISRUPTION PHENOTYPE</scope>
    <scope>PATHWAY</scope>
    <source>
        <strain>RK99-F33</strain>
    </source>
</reference>
<dbReference type="EC" id="2.5.1.-" evidence="5"/>
<dbReference type="EMBL" id="AB725916">
    <property type="protein sequence ID" value="BAM84046.1"/>
    <property type="molecule type" value="Genomic_DNA"/>
</dbReference>
<dbReference type="SMR" id="M1UZ07"/>
<dbReference type="GO" id="GO:0046872">
    <property type="term" value="F:metal ion binding"/>
    <property type="evidence" value="ECO:0007669"/>
    <property type="project" value="UniProtKB-KW"/>
</dbReference>
<dbReference type="GO" id="GO:0004659">
    <property type="term" value="F:prenyltransferase activity"/>
    <property type="evidence" value="ECO:0007669"/>
    <property type="project" value="InterPro"/>
</dbReference>
<dbReference type="GO" id="GO:0046165">
    <property type="term" value="P:alcohol biosynthetic process"/>
    <property type="evidence" value="ECO:0007669"/>
    <property type="project" value="UniProtKB-ARBA"/>
</dbReference>
<dbReference type="GO" id="GO:0008299">
    <property type="term" value="P:isoprenoid biosynthetic process"/>
    <property type="evidence" value="ECO:0007669"/>
    <property type="project" value="InterPro"/>
</dbReference>
<dbReference type="GO" id="GO:0043386">
    <property type="term" value="P:mycotoxin biosynthetic process"/>
    <property type="evidence" value="ECO:0007669"/>
    <property type="project" value="UniProtKB-ARBA"/>
</dbReference>
<dbReference type="CDD" id="cd00867">
    <property type="entry name" value="Trans_IPPS"/>
    <property type="match status" value="1"/>
</dbReference>
<dbReference type="Gene3D" id="1.10.600.10">
    <property type="entry name" value="Farnesyl Diphosphate Synthase"/>
    <property type="match status" value="1"/>
</dbReference>
<dbReference type="InterPro" id="IPR008949">
    <property type="entry name" value="Isoprenoid_synthase_dom_sf"/>
</dbReference>
<dbReference type="InterPro" id="IPR000092">
    <property type="entry name" value="Polyprenyl_synt"/>
</dbReference>
<dbReference type="PANTHER" id="PTHR12001">
    <property type="entry name" value="GERANYLGERANYL PYROPHOSPHATE SYNTHASE"/>
    <property type="match status" value="1"/>
</dbReference>
<dbReference type="PANTHER" id="PTHR12001:SF44">
    <property type="entry name" value="GERANYLGERANYL PYROPHOSPHATE SYNTHASE"/>
    <property type="match status" value="1"/>
</dbReference>
<dbReference type="Pfam" id="PF00348">
    <property type="entry name" value="polyprenyl_synt"/>
    <property type="match status" value="1"/>
</dbReference>
<dbReference type="SUPFAM" id="SSF48576">
    <property type="entry name" value="Terpenoid synthases"/>
    <property type="match status" value="1"/>
</dbReference>
<gene>
    <name evidence="3" type="primary">terC</name>
</gene>
<comment type="function">
    <text evidence="2 5">Prenyltransferase; part of the gene cluster that mediates the biosynthesis of terpendoles, indole-diterpene (IDT) mycotoxins including terpendole I, terpendole K, terpendole C, as well as the kinesin Eg5 inhibitor terpendole E (PubMed:23261604). Terpendoles biosynthesis begins with the synthesis of geranylgeranyl diphosphate (GGPP) by a yet unidentified GGPP synthase. Condensation of indole-3-glycerol phosphate with GGPP by the prenyltransferase terC then forms 3-geranylgeranylindole (3-GGI), followed by epoxidation and cyclization of this intermediate (by the FAD-dependent monooxygeanse terM and the terpene cyclase terB) to form paspaline. The cytochrome monooxygenase terQ then hydroxylates paspalline at C-11 to yield terpendole E. The cytochrome monooxygenase terP converts terpendole E to 13-desoxyterpendole I, and terQ converts 13-desoxyterpendole I into terpendole I. TerF and terK are required for conversion of terpendole I to terpendole C which is further converted to terpendole K (Probable).</text>
</comment>
<comment type="cofactor">
    <cofactor evidence="1">
        <name>Mg(2+)</name>
        <dbReference type="ChEBI" id="CHEBI:18420"/>
    </cofactor>
    <text evidence="1">Binds 3 Mg(2+) ions per subunit.</text>
</comment>
<comment type="pathway">
    <text evidence="2">Secondary metabolite biosynthesis.</text>
</comment>
<comment type="disruption phenotype">
    <text evidence="2">The disruption of the whole terpendoles biosynthesis cluster abolishes the terpendoles production.</text>
</comment>
<comment type="similarity">
    <text evidence="4">Belongs to the FPP/GGPP synthase family.</text>
</comment>
<protein>
    <recommendedName>
        <fullName evidence="3">Prenyltransferase terC</fullName>
        <ecNumber evidence="5">2.5.1.-</ecNumber>
    </recommendedName>
    <alternativeName>
        <fullName evidence="3">Terpendoles biosynthesis cluster protein C</fullName>
    </alternativeName>
</protein>
<sequence>MDWLGNRVSVGNIALLAIGASMGFIAKTSTLSKPEAPNTVQQYGYCKKLSSEKRNQAAGCPYEYLVSIYGRHHFESLVKEFNPLLKQEDPVKYDLVLEIMDAVHFALILVDDISDDSYQRKNQPTAHLIYGASETANRAYLVLTGVINRALRERPVLGAELLKALEDILQGQDLSLVWRRDGLKSFQYQGDESIAAYKNMASLKTGTLFVLLGRLLNDGGNELDDLLSRFGWFAQLQNDCKNIYSAEYATNKGAVAEDLRNGELSYPIVIALNDNSTSRVMERALASHAEADVEEALQALQSKPVRDACMRALQQASVGLEKLVLLWGRREKMQAGS</sequence>
<accession>M1UZ07</accession>
<evidence type="ECO:0000250" key="1">
    <source>
        <dbReference type="UniProtKB" id="Q12051"/>
    </source>
</evidence>
<evidence type="ECO:0000269" key="2">
    <source>
    </source>
</evidence>
<evidence type="ECO:0000303" key="3">
    <source>
    </source>
</evidence>
<evidence type="ECO:0000305" key="4"/>
<evidence type="ECO:0000305" key="5">
    <source>
    </source>
</evidence>
<name>TERC_TOLAL</name>
<organism>
    <name type="scientific">Tolypocladium album</name>
    <name type="common">Soil fungus</name>
    <name type="synonym">Chaunopycnis alba</name>
    <dbReference type="NCBI Taxonomy" id="124418"/>
    <lineage>
        <taxon>Eukaryota</taxon>
        <taxon>Fungi</taxon>
        <taxon>Dikarya</taxon>
        <taxon>Ascomycota</taxon>
        <taxon>Pezizomycotina</taxon>
        <taxon>Sordariomycetes</taxon>
        <taxon>Hypocreomycetidae</taxon>
        <taxon>Hypocreales</taxon>
        <taxon>Ophiocordycipitaceae</taxon>
        <taxon>Tolypocladium</taxon>
    </lineage>
</organism>
<keyword id="KW-0460">Magnesium</keyword>
<keyword id="KW-0479">Metal-binding</keyword>
<keyword id="KW-0808">Transferase</keyword>
<feature type="chain" id="PRO_0000460262" description="Prenyltransferase terC">
    <location>
        <begin position="1"/>
        <end position="337"/>
    </location>
</feature>
<feature type="binding site" evidence="1">
    <location>
        <position position="111"/>
    </location>
    <ligand>
        <name>Mg(2+)</name>
        <dbReference type="ChEBI" id="CHEBI:18420"/>
        <label>1</label>
    </ligand>
</feature>
<feature type="binding site" evidence="1">
    <location>
        <position position="111"/>
    </location>
    <ligand>
        <name>Mg(2+)</name>
        <dbReference type="ChEBI" id="CHEBI:18420"/>
        <label>2</label>
    </ligand>
</feature>
<feature type="binding site" evidence="1">
    <location>
        <position position="115"/>
    </location>
    <ligand>
        <name>Mg(2+)</name>
        <dbReference type="ChEBI" id="CHEBI:18420"/>
        <label>1</label>
    </ligand>
</feature>
<feature type="binding site" evidence="1">
    <location>
        <position position="115"/>
    </location>
    <ligand>
        <name>Mg(2+)</name>
        <dbReference type="ChEBI" id="CHEBI:18420"/>
        <label>2</label>
    </ligand>
</feature>